<feature type="chain" id="PRO_0000131608" description="Small ribosomal subunit protein uS5">
    <location>
        <begin position="1"/>
        <end position="164"/>
    </location>
</feature>
<feature type="domain" description="S5 DRBM" evidence="1">
    <location>
        <begin position="10"/>
        <end position="73"/>
    </location>
</feature>
<sequence>MAFKDNAVELEERVVAINRVTKVVKGGRRLRFAALVVVGDGNGRVGFGTGKAQEVPEAIRKAVEAAKKNMIEVPMVGTTIPHEVYTNFGGAKVLLKPAVEGSGVAAGGAVRAVIELAGVADITSKSLGSNTPINIVRATVEGLKQLKRAEEVAALRGISVSDLA</sequence>
<reference key="1">
    <citation type="journal article" date="2001" name="Proc. Natl. Acad. Sci. U.S.A.">
        <title>Complete genome sequence of an M1 strain of Streptococcus pyogenes.</title>
        <authorList>
            <person name="Ferretti J.J."/>
            <person name="McShan W.M."/>
            <person name="Ajdic D.J."/>
            <person name="Savic D.J."/>
            <person name="Savic G."/>
            <person name="Lyon K."/>
            <person name="Primeaux C."/>
            <person name="Sezate S."/>
            <person name="Suvorov A.N."/>
            <person name="Kenton S."/>
            <person name="Lai H.S."/>
            <person name="Lin S.P."/>
            <person name="Qian Y."/>
            <person name="Jia H.G."/>
            <person name="Najar F.Z."/>
            <person name="Ren Q."/>
            <person name="Zhu H."/>
            <person name="Song L."/>
            <person name="White J."/>
            <person name="Yuan X."/>
            <person name="Clifton S.W."/>
            <person name="Roe B.A."/>
            <person name="McLaughlin R.E."/>
        </authorList>
    </citation>
    <scope>NUCLEOTIDE SEQUENCE [LARGE SCALE GENOMIC DNA]</scope>
    <source>
        <strain>ATCC 700294 / SF370 / Serotype M1</strain>
    </source>
</reference>
<reference key="2">
    <citation type="journal article" date="2005" name="J. Infect. Dis.">
        <title>Evolutionary origin and emergence of a highly successful clone of serotype M1 group A Streptococcus involved multiple horizontal gene transfer events.</title>
        <authorList>
            <person name="Sumby P."/>
            <person name="Porcella S.F."/>
            <person name="Madrigal A.G."/>
            <person name="Barbian K.D."/>
            <person name="Virtaneva K."/>
            <person name="Ricklefs S.M."/>
            <person name="Sturdevant D.E."/>
            <person name="Graham M.R."/>
            <person name="Vuopio-Varkila J."/>
            <person name="Hoe N.P."/>
            <person name="Musser J.M."/>
        </authorList>
    </citation>
    <scope>NUCLEOTIDE SEQUENCE [LARGE SCALE GENOMIC DNA]</scope>
    <source>
        <strain>ATCC BAA-947 / MGAS5005 / Serotype M1</strain>
    </source>
</reference>
<evidence type="ECO:0000255" key="1">
    <source>
        <dbReference type="HAMAP-Rule" id="MF_01307"/>
    </source>
</evidence>
<evidence type="ECO:0000305" key="2"/>
<keyword id="KW-1185">Reference proteome</keyword>
<keyword id="KW-0687">Ribonucleoprotein</keyword>
<keyword id="KW-0689">Ribosomal protein</keyword>
<keyword id="KW-0694">RNA-binding</keyword>
<keyword id="KW-0699">rRNA-binding</keyword>
<comment type="function">
    <text evidence="1">With S4 and S12 plays an important role in translational accuracy.</text>
</comment>
<comment type="function">
    <text evidence="1">Located at the back of the 30S subunit body where it stabilizes the conformation of the head with respect to the body.</text>
</comment>
<comment type="subunit">
    <text evidence="1">Part of the 30S ribosomal subunit. Contacts proteins S4 and S8.</text>
</comment>
<comment type="domain">
    <text>The N-terminal domain interacts with the head of the 30S subunit; the C-terminal domain interacts with the body and contacts protein S4. The interaction surface between S4 and S5 is involved in control of translational fidelity.</text>
</comment>
<comment type="similarity">
    <text evidence="1">Belongs to the universal ribosomal protein uS5 family.</text>
</comment>
<protein>
    <recommendedName>
        <fullName evidence="1">Small ribosomal subunit protein uS5</fullName>
    </recommendedName>
    <alternativeName>
        <fullName evidence="2">30S ribosomal protein S5</fullName>
    </alternativeName>
</protein>
<dbReference type="EMBL" id="AE004092">
    <property type="protein sequence ID" value="AAK33199.1"/>
    <property type="molecule type" value="Genomic_DNA"/>
</dbReference>
<dbReference type="EMBL" id="CP000017">
    <property type="protein sequence ID" value="AAZ50680.1"/>
    <property type="molecule type" value="Genomic_DNA"/>
</dbReference>
<dbReference type="RefSeq" id="NP_268477.1">
    <property type="nucleotide sequence ID" value="NC_002737.2"/>
</dbReference>
<dbReference type="SMR" id="P66583"/>
<dbReference type="PaxDb" id="1314-HKU360_00094"/>
<dbReference type="KEGG" id="spy:SPy_0069"/>
<dbReference type="KEGG" id="spz:M5005_Spy0061"/>
<dbReference type="PATRIC" id="fig|160490.10.peg.61"/>
<dbReference type="HOGENOM" id="CLU_065898_2_2_9"/>
<dbReference type="OMA" id="GIKDVWT"/>
<dbReference type="PRO" id="PR:P66583"/>
<dbReference type="Proteomes" id="UP000000750">
    <property type="component" value="Chromosome"/>
</dbReference>
<dbReference type="GO" id="GO:0015935">
    <property type="term" value="C:small ribosomal subunit"/>
    <property type="evidence" value="ECO:0007669"/>
    <property type="project" value="InterPro"/>
</dbReference>
<dbReference type="GO" id="GO:0019843">
    <property type="term" value="F:rRNA binding"/>
    <property type="evidence" value="ECO:0007669"/>
    <property type="project" value="UniProtKB-UniRule"/>
</dbReference>
<dbReference type="GO" id="GO:0003735">
    <property type="term" value="F:structural constituent of ribosome"/>
    <property type="evidence" value="ECO:0007669"/>
    <property type="project" value="InterPro"/>
</dbReference>
<dbReference type="GO" id="GO:0006412">
    <property type="term" value="P:translation"/>
    <property type="evidence" value="ECO:0007669"/>
    <property type="project" value="UniProtKB-UniRule"/>
</dbReference>
<dbReference type="FunFam" id="3.30.160.20:FF:000001">
    <property type="entry name" value="30S ribosomal protein S5"/>
    <property type="match status" value="1"/>
</dbReference>
<dbReference type="FunFam" id="3.30.230.10:FF:000002">
    <property type="entry name" value="30S ribosomal protein S5"/>
    <property type="match status" value="1"/>
</dbReference>
<dbReference type="Gene3D" id="3.30.160.20">
    <property type="match status" value="1"/>
</dbReference>
<dbReference type="Gene3D" id="3.30.230.10">
    <property type="match status" value="1"/>
</dbReference>
<dbReference type="HAMAP" id="MF_01307_B">
    <property type="entry name" value="Ribosomal_uS5_B"/>
    <property type="match status" value="1"/>
</dbReference>
<dbReference type="InterPro" id="IPR020568">
    <property type="entry name" value="Ribosomal_Su5_D2-typ_SF"/>
</dbReference>
<dbReference type="InterPro" id="IPR000851">
    <property type="entry name" value="Ribosomal_uS5"/>
</dbReference>
<dbReference type="InterPro" id="IPR005712">
    <property type="entry name" value="Ribosomal_uS5_bac-type"/>
</dbReference>
<dbReference type="InterPro" id="IPR005324">
    <property type="entry name" value="Ribosomal_uS5_C"/>
</dbReference>
<dbReference type="InterPro" id="IPR013810">
    <property type="entry name" value="Ribosomal_uS5_N"/>
</dbReference>
<dbReference type="InterPro" id="IPR018192">
    <property type="entry name" value="Ribosomal_uS5_N_CS"/>
</dbReference>
<dbReference type="InterPro" id="IPR014721">
    <property type="entry name" value="Ribsml_uS5_D2-typ_fold_subgr"/>
</dbReference>
<dbReference type="NCBIfam" id="TIGR01021">
    <property type="entry name" value="rpsE_bact"/>
    <property type="match status" value="1"/>
</dbReference>
<dbReference type="PANTHER" id="PTHR48277">
    <property type="entry name" value="MITOCHONDRIAL RIBOSOMAL PROTEIN S5"/>
    <property type="match status" value="1"/>
</dbReference>
<dbReference type="PANTHER" id="PTHR48277:SF1">
    <property type="entry name" value="MITOCHONDRIAL RIBOSOMAL PROTEIN S5"/>
    <property type="match status" value="1"/>
</dbReference>
<dbReference type="Pfam" id="PF00333">
    <property type="entry name" value="Ribosomal_S5"/>
    <property type="match status" value="1"/>
</dbReference>
<dbReference type="Pfam" id="PF03719">
    <property type="entry name" value="Ribosomal_S5_C"/>
    <property type="match status" value="1"/>
</dbReference>
<dbReference type="SUPFAM" id="SSF54768">
    <property type="entry name" value="dsRNA-binding domain-like"/>
    <property type="match status" value="1"/>
</dbReference>
<dbReference type="SUPFAM" id="SSF54211">
    <property type="entry name" value="Ribosomal protein S5 domain 2-like"/>
    <property type="match status" value="1"/>
</dbReference>
<dbReference type="PROSITE" id="PS00585">
    <property type="entry name" value="RIBOSOMAL_S5"/>
    <property type="match status" value="1"/>
</dbReference>
<dbReference type="PROSITE" id="PS50881">
    <property type="entry name" value="S5_DSRBD"/>
    <property type="match status" value="1"/>
</dbReference>
<proteinExistence type="inferred from homology"/>
<name>RS5_STRP1</name>
<organism>
    <name type="scientific">Streptococcus pyogenes serotype M1</name>
    <dbReference type="NCBI Taxonomy" id="301447"/>
    <lineage>
        <taxon>Bacteria</taxon>
        <taxon>Bacillati</taxon>
        <taxon>Bacillota</taxon>
        <taxon>Bacilli</taxon>
        <taxon>Lactobacillales</taxon>
        <taxon>Streptococcaceae</taxon>
        <taxon>Streptococcus</taxon>
    </lineage>
</organism>
<accession>P66583</accession>
<accession>Q491N8</accession>
<accession>Q9A1V7</accession>
<gene>
    <name evidence="1" type="primary">rpsE</name>
    <name type="ordered locus">SPy_0069</name>
    <name type="ordered locus">M5005_Spy0061</name>
</gene>